<name>PSAE_SYNE7</name>
<gene>
    <name evidence="1" type="primary">psaE</name>
    <name type="ordered locus">Synpcc7942_1322</name>
</gene>
<keyword id="KW-0002">3D-structure</keyword>
<keyword id="KW-0472">Membrane</keyword>
<keyword id="KW-0602">Photosynthesis</keyword>
<keyword id="KW-0603">Photosystem I</keyword>
<keyword id="KW-1185">Reference proteome</keyword>
<keyword id="KW-0793">Thylakoid</keyword>
<protein>
    <recommendedName>
        <fullName evidence="1">Photosystem I reaction center subunit IV</fullName>
    </recommendedName>
</protein>
<dbReference type="EMBL" id="CP000100">
    <property type="protein sequence ID" value="ABB57352.1"/>
    <property type="molecule type" value="Genomic_DNA"/>
</dbReference>
<dbReference type="RefSeq" id="WP_011242545.1">
    <property type="nucleotide sequence ID" value="NZ_JACJTX010000003.1"/>
</dbReference>
<dbReference type="PDB" id="6KIF">
    <property type="method" value="EM"/>
    <property type="resolution" value="3.30 A"/>
    <property type="chains" value="E/Q/i=1-75"/>
</dbReference>
<dbReference type="PDB" id="6KIG">
    <property type="method" value="EM"/>
    <property type="resolution" value="2.90 A"/>
    <property type="chains" value="E/Q/i=1-75"/>
</dbReference>
<dbReference type="PDBsum" id="6KIF"/>
<dbReference type="PDBsum" id="6KIG"/>
<dbReference type="EMDB" id="EMD-9994"/>
<dbReference type="EMDB" id="EMD-9995"/>
<dbReference type="SMR" id="Q31NL7"/>
<dbReference type="STRING" id="1140.Synpcc7942_1322"/>
<dbReference type="PaxDb" id="1140-Synpcc7942_1322"/>
<dbReference type="KEGG" id="syf:Synpcc7942_1322"/>
<dbReference type="eggNOG" id="ENOG503313D">
    <property type="taxonomic scope" value="Bacteria"/>
</dbReference>
<dbReference type="HOGENOM" id="CLU_136462_2_1_3"/>
<dbReference type="OrthoDB" id="427926at2"/>
<dbReference type="BioCyc" id="MetaCyc:SYNPCC7942_1322-MONOMER"/>
<dbReference type="BioCyc" id="SYNEL:SYNPCC7942_1322-MONOMER"/>
<dbReference type="Proteomes" id="UP000889800">
    <property type="component" value="Chromosome"/>
</dbReference>
<dbReference type="GO" id="GO:0009538">
    <property type="term" value="C:photosystem I reaction center"/>
    <property type="evidence" value="ECO:0007669"/>
    <property type="project" value="InterPro"/>
</dbReference>
<dbReference type="GO" id="GO:0031676">
    <property type="term" value="C:plasma membrane-derived thylakoid membrane"/>
    <property type="evidence" value="ECO:0007669"/>
    <property type="project" value="UniProtKB-SubCell"/>
</dbReference>
<dbReference type="GO" id="GO:0015979">
    <property type="term" value="P:photosynthesis"/>
    <property type="evidence" value="ECO:0007669"/>
    <property type="project" value="UniProtKB-UniRule"/>
</dbReference>
<dbReference type="Gene3D" id="2.30.30.50">
    <property type="match status" value="1"/>
</dbReference>
<dbReference type="HAMAP" id="MF_00613">
    <property type="entry name" value="PSI_PsaE"/>
    <property type="match status" value="1"/>
</dbReference>
<dbReference type="InterPro" id="IPR008990">
    <property type="entry name" value="Elect_transpt_acc-like_dom_sf"/>
</dbReference>
<dbReference type="InterPro" id="IPR003375">
    <property type="entry name" value="PSI_PsaE"/>
</dbReference>
<dbReference type="NCBIfam" id="NF002745">
    <property type="entry name" value="PRK02749.1"/>
    <property type="match status" value="1"/>
</dbReference>
<dbReference type="PANTHER" id="PTHR34549">
    <property type="entry name" value="PHOTOSYSTEM I REACTION CENTER SUBUNIT IV A, CHLOROPLASTIC-RELATED"/>
    <property type="match status" value="1"/>
</dbReference>
<dbReference type="PANTHER" id="PTHR34549:SF2">
    <property type="entry name" value="PHOTOSYSTEM I SUBUNIT IV"/>
    <property type="match status" value="1"/>
</dbReference>
<dbReference type="Pfam" id="PF02427">
    <property type="entry name" value="PSI_PsaE"/>
    <property type="match status" value="1"/>
</dbReference>
<dbReference type="SUPFAM" id="SSF50090">
    <property type="entry name" value="Electron transport accessory proteins"/>
    <property type="match status" value="1"/>
</dbReference>
<evidence type="ECO:0000255" key="1">
    <source>
        <dbReference type="HAMAP-Rule" id="MF_00613"/>
    </source>
</evidence>
<proteinExistence type="evidence at protein level"/>
<reference key="1">
    <citation type="submission" date="2005-08" db="EMBL/GenBank/DDBJ databases">
        <title>Complete sequence of chromosome 1 of Synechococcus elongatus PCC 7942.</title>
        <authorList>
            <consortium name="US DOE Joint Genome Institute"/>
            <person name="Copeland A."/>
            <person name="Lucas S."/>
            <person name="Lapidus A."/>
            <person name="Barry K."/>
            <person name="Detter J.C."/>
            <person name="Glavina T."/>
            <person name="Hammon N."/>
            <person name="Israni S."/>
            <person name="Pitluck S."/>
            <person name="Schmutz J."/>
            <person name="Larimer F."/>
            <person name="Land M."/>
            <person name="Kyrpides N."/>
            <person name="Lykidis A."/>
            <person name="Golden S."/>
            <person name="Richardson P."/>
        </authorList>
    </citation>
    <scope>NUCLEOTIDE SEQUENCE [LARGE SCALE GENOMIC DNA]</scope>
    <source>
        <strain>ATCC 33912 / PCC 7942 / FACHB-805</strain>
    </source>
</reference>
<sequence length="75" mass="8138">MAIARGDKVRILRPESYWFNEVGTVASVDQSGIKYPVVVRFEKVNYNGFSGSDGGVNTNNFAEAELQVVAAAAKK</sequence>
<organism>
    <name type="scientific">Synechococcus elongatus (strain ATCC 33912 / PCC 7942 / FACHB-805)</name>
    <name type="common">Anacystis nidulans R2</name>
    <dbReference type="NCBI Taxonomy" id="1140"/>
    <lineage>
        <taxon>Bacteria</taxon>
        <taxon>Bacillati</taxon>
        <taxon>Cyanobacteriota</taxon>
        <taxon>Cyanophyceae</taxon>
        <taxon>Synechococcales</taxon>
        <taxon>Synechococcaceae</taxon>
        <taxon>Synechococcus</taxon>
    </lineage>
</organism>
<comment type="function">
    <text evidence="1">Stabilizes the interaction between PsaC and the PSI core, assists the docking of the ferredoxin to PSI and interacts with ferredoxin-NADP oxidoreductase.</text>
</comment>
<comment type="subcellular location">
    <subcellularLocation>
        <location evidence="1">Cellular thylakoid membrane</location>
        <topology evidence="1">Peripheral membrane protein</topology>
    </subcellularLocation>
</comment>
<comment type="similarity">
    <text evidence="1">Belongs to the PsaE family.</text>
</comment>
<feature type="chain" id="PRO_1000061310" description="Photosystem I reaction center subunit IV">
    <location>
        <begin position="1"/>
        <end position="75"/>
    </location>
</feature>
<accession>Q31NL7</accession>